<organism>
    <name type="scientific">Chromobacterium violaceum (strain ATCC 12472 / DSM 30191 / JCM 1249 / CCUG 213 / NBRC 12614 / NCIMB 9131 / NCTC 9757 / MK)</name>
    <dbReference type="NCBI Taxonomy" id="243365"/>
    <lineage>
        <taxon>Bacteria</taxon>
        <taxon>Pseudomonadati</taxon>
        <taxon>Pseudomonadota</taxon>
        <taxon>Betaproteobacteria</taxon>
        <taxon>Neisseriales</taxon>
        <taxon>Chromobacteriaceae</taxon>
        <taxon>Chromobacterium</taxon>
    </lineage>
</organism>
<accession>Q7NZD5</accession>
<comment type="function">
    <text evidence="1">Catalyzes a trans-dehydration via an enolate intermediate.</text>
</comment>
<comment type="catalytic activity">
    <reaction evidence="1">
        <text>3-dehydroquinate = 3-dehydroshikimate + H2O</text>
        <dbReference type="Rhea" id="RHEA:21096"/>
        <dbReference type="ChEBI" id="CHEBI:15377"/>
        <dbReference type="ChEBI" id="CHEBI:16630"/>
        <dbReference type="ChEBI" id="CHEBI:32364"/>
        <dbReference type="EC" id="4.2.1.10"/>
    </reaction>
</comment>
<comment type="pathway">
    <text evidence="1">Metabolic intermediate biosynthesis; chorismate biosynthesis; chorismate from D-erythrose 4-phosphate and phosphoenolpyruvate: step 3/7.</text>
</comment>
<comment type="subunit">
    <text evidence="1">Homododecamer.</text>
</comment>
<comment type="similarity">
    <text evidence="1">Belongs to the type-II 3-dehydroquinase family.</text>
</comment>
<evidence type="ECO:0000255" key="1">
    <source>
        <dbReference type="HAMAP-Rule" id="MF_00169"/>
    </source>
</evidence>
<name>AROQ_CHRVO</name>
<keyword id="KW-0028">Amino-acid biosynthesis</keyword>
<keyword id="KW-0057">Aromatic amino acid biosynthesis</keyword>
<keyword id="KW-0456">Lyase</keyword>
<keyword id="KW-1185">Reference proteome</keyword>
<sequence length="156" mass="17088">MKNRSLALSQSILVLHGPNLNLLGVREPQHYGRDTLDDINRRLTQQAKAAGFSLSALQSNAEHILIERIHQCLDDGTAFILINPAAFTHTSVALRDALAAVKVPFIEVHLSNVHAREPFRQHSYFSDLALGVICGLGAHGYELALAHAMRHLSAQA</sequence>
<reference key="1">
    <citation type="journal article" date="2003" name="Proc. Natl. Acad. Sci. U.S.A.">
        <title>The complete genome sequence of Chromobacterium violaceum reveals remarkable and exploitable bacterial adaptability.</title>
        <authorList>
            <person name="Vasconcelos A.T.R."/>
            <person name="de Almeida D.F."/>
            <person name="Hungria M."/>
            <person name="Guimaraes C.T."/>
            <person name="Antonio R.V."/>
            <person name="Almeida F.C."/>
            <person name="de Almeida L.G.P."/>
            <person name="de Almeida R."/>
            <person name="Alves-Gomes J.A."/>
            <person name="Andrade E.M."/>
            <person name="Araripe J."/>
            <person name="de Araujo M.F.F."/>
            <person name="Astolfi-Filho S."/>
            <person name="Azevedo V."/>
            <person name="Baptista A.J."/>
            <person name="Bataus L.A.M."/>
            <person name="Batista J.S."/>
            <person name="Belo A."/>
            <person name="van den Berg C."/>
            <person name="Bogo M."/>
            <person name="Bonatto S."/>
            <person name="Bordignon J."/>
            <person name="Brigido M.M."/>
            <person name="Brito C.A."/>
            <person name="Brocchi M."/>
            <person name="Burity H.A."/>
            <person name="Camargo A.A."/>
            <person name="Cardoso D.D.P."/>
            <person name="Carneiro N.P."/>
            <person name="Carraro D.M."/>
            <person name="Carvalho C.M.B."/>
            <person name="Cascardo J.C.M."/>
            <person name="Cavada B.S."/>
            <person name="Chueire L.M.O."/>
            <person name="Creczynski-Pasa T.B."/>
            <person name="Cunha-Junior N.C."/>
            <person name="Fagundes N."/>
            <person name="Falcao C.L."/>
            <person name="Fantinatti F."/>
            <person name="Farias I.P."/>
            <person name="Felipe M.S.S."/>
            <person name="Ferrari L.P."/>
            <person name="Ferro J.A."/>
            <person name="Ferro M.I.T."/>
            <person name="Franco G.R."/>
            <person name="Freitas N.S.A."/>
            <person name="Furlan L.R."/>
            <person name="Gazzinelli R.T."/>
            <person name="Gomes E.A."/>
            <person name="Goncalves P.R."/>
            <person name="Grangeiro T.B."/>
            <person name="Grattapaglia D."/>
            <person name="Grisard E.C."/>
            <person name="Hanna E.S."/>
            <person name="Jardim S.N."/>
            <person name="Laurino J."/>
            <person name="Leoi L.C.T."/>
            <person name="Lima L.F.A."/>
            <person name="Loureiro M.F."/>
            <person name="Lyra M.C.C.P."/>
            <person name="Madeira H.M.F."/>
            <person name="Manfio G.P."/>
            <person name="Maranhao A.Q."/>
            <person name="Martins W.S."/>
            <person name="di Mauro S.M.Z."/>
            <person name="de Medeiros S.R.B."/>
            <person name="Meissner R.V."/>
            <person name="Moreira M.A.M."/>
            <person name="Nascimento F.F."/>
            <person name="Nicolas M.F."/>
            <person name="Oliveira J.G."/>
            <person name="Oliveira S.C."/>
            <person name="Paixao R.F.C."/>
            <person name="Parente J.A."/>
            <person name="Pedrosa F.O."/>
            <person name="Pena S.D.J."/>
            <person name="Pereira J.O."/>
            <person name="Pereira M."/>
            <person name="Pinto L.S.R.C."/>
            <person name="Pinto L.S."/>
            <person name="Porto J.I.R."/>
            <person name="Potrich D.P."/>
            <person name="Ramalho-Neto C.E."/>
            <person name="Reis A.M.M."/>
            <person name="Rigo L.U."/>
            <person name="Rondinelli E."/>
            <person name="Santos E.B.P."/>
            <person name="Santos F.R."/>
            <person name="Schneider M.P.C."/>
            <person name="Seuanez H.N."/>
            <person name="Silva A.M.R."/>
            <person name="da Silva A.L.C."/>
            <person name="Silva D.W."/>
            <person name="Silva R."/>
            <person name="Simoes I.C."/>
            <person name="Simon D."/>
            <person name="Soares C.M.A."/>
            <person name="Soares R.B.A."/>
            <person name="Souza E.M."/>
            <person name="Souza K.R.L."/>
            <person name="Souza R.C."/>
            <person name="Steffens M.B.R."/>
            <person name="Steindel M."/>
            <person name="Teixeira S.R."/>
            <person name="Urmenyi T."/>
            <person name="Vettore A."/>
            <person name="Wassem R."/>
            <person name="Zaha A."/>
            <person name="Simpson A.J.G."/>
        </authorList>
    </citation>
    <scope>NUCLEOTIDE SEQUENCE [LARGE SCALE GENOMIC DNA]</scope>
    <source>
        <strain>ATCC 12472 / DSM 30191 / JCM 1249 / CCUG 213 / NBRC 12614 / NCIMB 9131 / NCTC 9757 / MK</strain>
    </source>
</reference>
<feature type="chain" id="PRO_0000159890" description="3-dehydroquinate dehydratase">
    <location>
        <begin position="1"/>
        <end position="156"/>
    </location>
</feature>
<feature type="active site" description="Proton acceptor" evidence="1">
    <location>
        <position position="31"/>
    </location>
</feature>
<feature type="active site" description="Proton donor" evidence="1">
    <location>
        <position position="109"/>
    </location>
</feature>
<feature type="binding site" evidence="1">
    <location>
        <position position="83"/>
    </location>
    <ligand>
        <name>substrate</name>
    </ligand>
</feature>
<feature type="binding site" evidence="1">
    <location>
        <position position="89"/>
    </location>
    <ligand>
        <name>substrate</name>
    </ligand>
</feature>
<feature type="binding site" evidence="1">
    <location>
        <position position="96"/>
    </location>
    <ligand>
        <name>substrate</name>
    </ligand>
</feature>
<feature type="binding site" evidence="1">
    <location>
        <begin position="110"/>
        <end position="111"/>
    </location>
    <ligand>
        <name>substrate</name>
    </ligand>
</feature>
<feature type="binding site" evidence="1">
    <location>
        <position position="120"/>
    </location>
    <ligand>
        <name>substrate</name>
    </ligand>
</feature>
<feature type="site" description="Transition state stabilizer" evidence="1">
    <location>
        <position position="26"/>
    </location>
</feature>
<proteinExistence type="inferred from homology"/>
<gene>
    <name evidence="1" type="primary">aroQ</name>
    <name type="ordered locus">CV_0987</name>
</gene>
<dbReference type="EC" id="4.2.1.10" evidence="1"/>
<dbReference type="EMBL" id="AE016825">
    <property type="protein sequence ID" value="AAQ58661.1"/>
    <property type="molecule type" value="Genomic_DNA"/>
</dbReference>
<dbReference type="RefSeq" id="WP_011134542.1">
    <property type="nucleotide sequence ID" value="NC_005085.1"/>
</dbReference>
<dbReference type="SMR" id="Q7NZD5"/>
<dbReference type="STRING" id="243365.CV_0987"/>
<dbReference type="KEGG" id="cvi:CV_0987"/>
<dbReference type="eggNOG" id="COG0757">
    <property type="taxonomic scope" value="Bacteria"/>
</dbReference>
<dbReference type="HOGENOM" id="CLU_090968_1_0_4"/>
<dbReference type="UniPathway" id="UPA00053">
    <property type="reaction ID" value="UER00086"/>
</dbReference>
<dbReference type="Proteomes" id="UP000001424">
    <property type="component" value="Chromosome"/>
</dbReference>
<dbReference type="GO" id="GO:0003855">
    <property type="term" value="F:3-dehydroquinate dehydratase activity"/>
    <property type="evidence" value="ECO:0007669"/>
    <property type="project" value="UniProtKB-UniRule"/>
</dbReference>
<dbReference type="GO" id="GO:0008652">
    <property type="term" value="P:amino acid biosynthetic process"/>
    <property type="evidence" value="ECO:0007669"/>
    <property type="project" value="UniProtKB-KW"/>
</dbReference>
<dbReference type="GO" id="GO:0009073">
    <property type="term" value="P:aromatic amino acid family biosynthetic process"/>
    <property type="evidence" value="ECO:0007669"/>
    <property type="project" value="UniProtKB-KW"/>
</dbReference>
<dbReference type="GO" id="GO:0009423">
    <property type="term" value="P:chorismate biosynthetic process"/>
    <property type="evidence" value="ECO:0007669"/>
    <property type="project" value="UniProtKB-UniRule"/>
</dbReference>
<dbReference type="GO" id="GO:0019631">
    <property type="term" value="P:quinate catabolic process"/>
    <property type="evidence" value="ECO:0007669"/>
    <property type="project" value="TreeGrafter"/>
</dbReference>
<dbReference type="CDD" id="cd00466">
    <property type="entry name" value="DHQase_II"/>
    <property type="match status" value="1"/>
</dbReference>
<dbReference type="Gene3D" id="3.40.50.9100">
    <property type="entry name" value="Dehydroquinase, class II"/>
    <property type="match status" value="1"/>
</dbReference>
<dbReference type="HAMAP" id="MF_00169">
    <property type="entry name" value="AroQ"/>
    <property type="match status" value="1"/>
</dbReference>
<dbReference type="InterPro" id="IPR001874">
    <property type="entry name" value="DHquinase_II"/>
</dbReference>
<dbReference type="InterPro" id="IPR018509">
    <property type="entry name" value="DHquinase_II_CS"/>
</dbReference>
<dbReference type="InterPro" id="IPR036441">
    <property type="entry name" value="DHquinase_II_sf"/>
</dbReference>
<dbReference type="NCBIfam" id="TIGR01088">
    <property type="entry name" value="aroQ"/>
    <property type="match status" value="1"/>
</dbReference>
<dbReference type="NCBIfam" id="NF003804">
    <property type="entry name" value="PRK05395.1-1"/>
    <property type="match status" value="1"/>
</dbReference>
<dbReference type="NCBIfam" id="NF003805">
    <property type="entry name" value="PRK05395.1-2"/>
    <property type="match status" value="1"/>
</dbReference>
<dbReference type="NCBIfam" id="NF003806">
    <property type="entry name" value="PRK05395.1-3"/>
    <property type="match status" value="1"/>
</dbReference>
<dbReference type="NCBIfam" id="NF003807">
    <property type="entry name" value="PRK05395.1-4"/>
    <property type="match status" value="1"/>
</dbReference>
<dbReference type="PANTHER" id="PTHR21272">
    <property type="entry name" value="CATABOLIC 3-DEHYDROQUINASE"/>
    <property type="match status" value="1"/>
</dbReference>
<dbReference type="PANTHER" id="PTHR21272:SF3">
    <property type="entry name" value="CATABOLIC 3-DEHYDROQUINASE"/>
    <property type="match status" value="1"/>
</dbReference>
<dbReference type="Pfam" id="PF01220">
    <property type="entry name" value="DHquinase_II"/>
    <property type="match status" value="1"/>
</dbReference>
<dbReference type="PIRSF" id="PIRSF001399">
    <property type="entry name" value="DHquinase_II"/>
    <property type="match status" value="1"/>
</dbReference>
<dbReference type="SUPFAM" id="SSF52304">
    <property type="entry name" value="Type II 3-dehydroquinate dehydratase"/>
    <property type="match status" value="1"/>
</dbReference>
<dbReference type="PROSITE" id="PS01029">
    <property type="entry name" value="DEHYDROQUINASE_II"/>
    <property type="match status" value="1"/>
</dbReference>
<protein>
    <recommendedName>
        <fullName evidence="1">3-dehydroquinate dehydratase</fullName>
        <shortName evidence="1">3-dehydroquinase</shortName>
        <ecNumber evidence="1">4.2.1.10</ecNumber>
    </recommendedName>
    <alternativeName>
        <fullName evidence="1">Type II DHQase</fullName>
    </alternativeName>
</protein>